<comment type="similarity">
    <text evidence="2">Belongs to the transcriptional regulatory Fis family.</text>
</comment>
<comment type="sequence caution" evidence="2">
    <conflict type="erroneous initiation">
        <sequence resource="EMBL-CDS" id="AAG08238"/>
    </conflict>
</comment>
<evidence type="ECO:0000250" key="1"/>
<evidence type="ECO:0000305" key="2"/>
<evidence type="ECO:0007829" key="3">
    <source>
        <dbReference type="PDB" id="6M10"/>
    </source>
</evidence>
<proteinExistence type="evidence at protein level"/>
<dbReference type="EMBL" id="AE004091">
    <property type="protein sequence ID" value="AAG08238.1"/>
    <property type="status" value="ALT_INIT"/>
    <property type="molecule type" value="Genomic_DNA"/>
</dbReference>
<dbReference type="PIR" id="E83040">
    <property type="entry name" value="E83040"/>
</dbReference>
<dbReference type="PDB" id="6M10">
    <property type="method" value="X-ray"/>
    <property type="resolution" value="2.98 A"/>
    <property type="chains" value="A/B/C/D=1-104"/>
</dbReference>
<dbReference type="PDBsum" id="6M10"/>
<dbReference type="SMR" id="Q9HUW0"/>
<dbReference type="FunCoup" id="Q9HUW0">
    <property type="interactions" value="228"/>
</dbReference>
<dbReference type="STRING" id="208964.PA4853"/>
<dbReference type="PaxDb" id="208964-PA4853"/>
<dbReference type="KEGG" id="pae:PA4853"/>
<dbReference type="PATRIC" id="fig|208964.12.peg.5085"/>
<dbReference type="PseudoCAP" id="PA4853"/>
<dbReference type="HOGENOM" id="CLU_158040_3_3_6"/>
<dbReference type="InParanoid" id="Q9HUW0"/>
<dbReference type="OrthoDB" id="9802388at2"/>
<dbReference type="PhylomeDB" id="Q9HUW0"/>
<dbReference type="Proteomes" id="UP000002438">
    <property type="component" value="Chromosome"/>
</dbReference>
<dbReference type="GO" id="GO:0043565">
    <property type="term" value="F:sequence-specific DNA binding"/>
    <property type="evidence" value="ECO:0000318"/>
    <property type="project" value="GO_Central"/>
</dbReference>
<dbReference type="GO" id="GO:0006355">
    <property type="term" value="P:regulation of DNA-templated transcription"/>
    <property type="evidence" value="ECO:0007669"/>
    <property type="project" value="InterPro"/>
</dbReference>
<dbReference type="FunFam" id="1.10.10.60:FF:000006">
    <property type="entry name" value="DNA-binding protein Fis"/>
    <property type="match status" value="1"/>
</dbReference>
<dbReference type="Gene3D" id="1.10.10.60">
    <property type="entry name" value="Homeodomain-like"/>
    <property type="match status" value="1"/>
</dbReference>
<dbReference type="InterPro" id="IPR005412">
    <property type="entry name" value="Fis_DNA-bd"/>
</dbReference>
<dbReference type="InterPro" id="IPR009057">
    <property type="entry name" value="Homeodomain-like_sf"/>
</dbReference>
<dbReference type="InterPro" id="IPR002197">
    <property type="entry name" value="HTH_Fis"/>
</dbReference>
<dbReference type="InterPro" id="IPR050207">
    <property type="entry name" value="Trans_regulatory_Fis"/>
</dbReference>
<dbReference type="NCBIfam" id="NF001659">
    <property type="entry name" value="PRK00430.1"/>
    <property type="match status" value="1"/>
</dbReference>
<dbReference type="PANTHER" id="PTHR47918">
    <property type="entry name" value="DNA-BINDING PROTEIN FIS"/>
    <property type="match status" value="1"/>
</dbReference>
<dbReference type="PANTHER" id="PTHR47918:SF1">
    <property type="entry name" value="DNA-BINDING PROTEIN FIS"/>
    <property type="match status" value="1"/>
</dbReference>
<dbReference type="Pfam" id="PF02954">
    <property type="entry name" value="HTH_8"/>
    <property type="match status" value="1"/>
</dbReference>
<dbReference type="PIRSF" id="PIRSF002097">
    <property type="entry name" value="DNA-binding_Fis"/>
    <property type="match status" value="1"/>
</dbReference>
<dbReference type="PRINTS" id="PR01591">
    <property type="entry name" value="DNABINDNGFIS"/>
</dbReference>
<dbReference type="PRINTS" id="PR01590">
    <property type="entry name" value="HTHFIS"/>
</dbReference>
<dbReference type="SUPFAM" id="SSF46689">
    <property type="entry name" value="Homeodomain-like"/>
    <property type="match status" value="1"/>
</dbReference>
<name>FISL_PSEAE</name>
<sequence>MTTETLVSGTTPVSDNANLKQHLTTPTQEGQTLRDSVEKALHNYFAHLEGQPVTDVYNMVLCEVEAPLLETVMNHVKGNQTKASELLGLNRGTLRKKLKQYDLL</sequence>
<organism>
    <name type="scientific">Pseudomonas aeruginosa (strain ATCC 15692 / DSM 22644 / CIP 104116 / JCM 14847 / LMG 12228 / 1C / PRS 101 / PAO1)</name>
    <dbReference type="NCBI Taxonomy" id="208964"/>
    <lineage>
        <taxon>Bacteria</taxon>
        <taxon>Pseudomonadati</taxon>
        <taxon>Pseudomonadota</taxon>
        <taxon>Gammaproteobacteria</taxon>
        <taxon>Pseudomonadales</taxon>
        <taxon>Pseudomonadaceae</taxon>
        <taxon>Pseudomonas</taxon>
    </lineage>
</organism>
<gene>
    <name type="ordered locus">PA4853</name>
</gene>
<accession>Q9HUW0</accession>
<feature type="chain" id="PRO_0000203907" description="Putative Fis-like DNA-binding protein">
    <location>
        <begin position="1"/>
        <end position="104"/>
    </location>
</feature>
<feature type="DNA-binding region" description="H-T-H motif" evidence="1">
    <location>
        <begin position="80"/>
        <end position="99"/>
    </location>
</feature>
<feature type="helix" evidence="3">
    <location>
        <begin position="33"/>
        <end position="46"/>
    </location>
</feature>
<feature type="turn" evidence="3">
    <location>
        <begin position="47"/>
        <end position="50"/>
    </location>
</feature>
<feature type="helix" evidence="3">
    <location>
        <begin position="56"/>
        <end position="75"/>
    </location>
</feature>
<feature type="turn" evidence="3">
    <location>
        <begin position="76"/>
        <end position="78"/>
    </location>
</feature>
<feature type="helix" evidence="3">
    <location>
        <begin position="80"/>
        <end position="87"/>
    </location>
</feature>
<feature type="helix" evidence="3">
    <location>
        <begin position="93"/>
        <end position="98"/>
    </location>
</feature>
<feature type="turn" evidence="3">
    <location>
        <begin position="99"/>
        <end position="102"/>
    </location>
</feature>
<protein>
    <recommendedName>
        <fullName>Putative Fis-like DNA-binding protein</fullName>
    </recommendedName>
</protein>
<keyword id="KW-0002">3D-structure</keyword>
<keyword id="KW-0238">DNA-binding</keyword>
<keyword id="KW-1185">Reference proteome</keyword>
<reference key="1">
    <citation type="journal article" date="2000" name="Nature">
        <title>Complete genome sequence of Pseudomonas aeruginosa PAO1, an opportunistic pathogen.</title>
        <authorList>
            <person name="Stover C.K."/>
            <person name="Pham X.-Q.T."/>
            <person name="Erwin A.L."/>
            <person name="Mizoguchi S.D."/>
            <person name="Warrener P."/>
            <person name="Hickey M.J."/>
            <person name="Brinkman F.S.L."/>
            <person name="Hufnagle W.O."/>
            <person name="Kowalik D.J."/>
            <person name="Lagrou M."/>
            <person name="Garber R.L."/>
            <person name="Goltry L."/>
            <person name="Tolentino E."/>
            <person name="Westbrock-Wadman S."/>
            <person name="Yuan Y."/>
            <person name="Brody L.L."/>
            <person name="Coulter S.N."/>
            <person name="Folger K.R."/>
            <person name="Kas A."/>
            <person name="Larbig K."/>
            <person name="Lim R.M."/>
            <person name="Smith K.A."/>
            <person name="Spencer D.H."/>
            <person name="Wong G.K.-S."/>
            <person name="Wu Z."/>
            <person name="Paulsen I.T."/>
            <person name="Reizer J."/>
            <person name="Saier M.H. Jr."/>
            <person name="Hancock R.E.W."/>
            <person name="Lory S."/>
            <person name="Olson M.V."/>
        </authorList>
    </citation>
    <scope>NUCLEOTIDE SEQUENCE [LARGE SCALE GENOMIC DNA]</scope>
    <source>
        <strain>ATCC 15692 / DSM 22644 / CIP 104116 / JCM 14847 / LMG 12228 / 1C / PRS 101 / PAO1</strain>
    </source>
</reference>